<comment type="function">
    <text evidence="1">Part of the binding-protein-dependent transport system for glutamine; probably responsible for the translocation of the substrate across the membrane.</text>
</comment>
<comment type="subcellular location">
    <subcellularLocation>
        <location>Cell inner membrane</location>
        <topology>Multi-pass membrane protein</topology>
    </subcellularLocation>
</comment>
<comment type="similarity">
    <text evidence="3">Belongs to the binding-protein-dependent transport system permease family. HisMQ subfamily.</text>
</comment>
<feature type="chain" id="PRO_0000286465" description="Putative glutamine transport system permease protein GlnP">
    <location>
        <begin position="1"/>
        <end position="218"/>
    </location>
</feature>
<feature type="transmembrane region" description="Helical" evidence="2">
    <location>
        <begin position="25"/>
        <end position="45"/>
    </location>
</feature>
<feature type="transmembrane region" description="Helical" evidence="2">
    <location>
        <begin position="57"/>
        <end position="79"/>
    </location>
</feature>
<feature type="transmembrane region" description="Helical" evidence="2">
    <location>
        <begin position="86"/>
        <end position="108"/>
    </location>
</feature>
<feature type="transmembrane region" description="Helical" evidence="2">
    <location>
        <begin position="187"/>
        <end position="207"/>
    </location>
</feature>
<feature type="domain" description="ABC transmembrane type-1" evidence="2">
    <location>
        <begin position="19"/>
        <end position="208"/>
    </location>
</feature>
<name>GLNP_RICTY</name>
<sequence length="218" mass="24508">MLKYLIKFYPKILFIIEGTLVTLKYSIIAVILGLVIGMLLAICKVNKNCVLRLFANFYTSIFRGTPLLVQLSIIYFAAPYIISIKFSVFMAGVISFALNSGAYVSEVIRAGINTIDKGQFEAAEALAIPKFLIMKDIILPQAINNIFPSLVNELINLIKESAIISMLGEMDLMRRAQIVSIETYNYFFPMLIAACCYYILVMLISFIAKIIEKKMIVN</sequence>
<reference key="1">
    <citation type="journal article" date="2004" name="J. Bacteriol.">
        <title>Complete genome sequence of Rickettsia typhi and comparison with sequences of other Rickettsiae.</title>
        <authorList>
            <person name="McLeod M.P."/>
            <person name="Qin X."/>
            <person name="Karpathy S.E."/>
            <person name="Gioia J."/>
            <person name="Highlander S.K."/>
            <person name="Fox G.E."/>
            <person name="McNeill T.Z."/>
            <person name="Jiang H."/>
            <person name="Muzny D."/>
            <person name="Jacob L.S."/>
            <person name="Hawes A.C."/>
            <person name="Sodergren E."/>
            <person name="Gill R."/>
            <person name="Hume J."/>
            <person name="Morgan M."/>
            <person name="Fan G."/>
            <person name="Amin A.G."/>
            <person name="Gibbs R.A."/>
            <person name="Hong C."/>
            <person name="Yu X.-J."/>
            <person name="Walker D.H."/>
            <person name="Weinstock G.M."/>
        </authorList>
    </citation>
    <scope>NUCLEOTIDE SEQUENCE [LARGE SCALE GENOMIC DNA]</scope>
    <source>
        <strain>ATCC VR-144 / Wilmington</strain>
    </source>
</reference>
<keyword id="KW-0029">Amino-acid transport</keyword>
<keyword id="KW-0997">Cell inner membrane</keyword>
<keyword id="KW-1003">Cell membrane</keyword>
<keyword id="KW-0472">Membrane</keyword>
<keyword id="KW-0812">Transmembrane</keyword>
<keyword id="KW-1133">Transmembrane helix</keyword>
<keyword id="KW-0813">Transport</keyword>
<protein>
    <recommendedName>
        <fullName>Putative glutamine transport system permease protein GlnP</fullName>
    </recommendedName>
</protein>
<gene>
    <name type="primary">glnP</name>
    <name type="ordered locus">RT0118</name>
</gene>
<evidence type="ECO:0000250" key="1"/>
<evidence type="ECO:0000255" key="2">
    <source>
        <dbReference type="PROSITE-ProRule" id="PRU00441"/>
    </source>
</evidence>
<evidence type="ECO:0000305" key="3"/>
<organism>
    <name type="scientific">Rickettsia typhi (strain ATCC VR-144 / Wilmington)</name>
    <dbReference type="NCBI Taxonomy" id="257363"/>
    <lineage>
        <taxon>Bacteria</taxon>
        <taxon>Pseudomonadati</taxon>
        <taxon>Pseudomonadota</taxon>
        <taxon>Alphaproteobacteria</taxon>
        <taxon>Rickettsiales</taxon>
        <taxon>Rickettsiaceae</taxon>
        <taxon>Rickettsieae</taxon>
        <taxon>Rickettsia</taxon>
        <taxon>typhus group</taxon>
    </lineage>
</organism>
<accession>Q68XN8</accession>
<dbReference type="EMBL" id="AE017197">
    <property type="protein sequence ID" value="AAU03604.1"/>
    <property type="molecule type" value="Genomic_DNA"/>
</dbReference>
<dbReference type="RefSeq" id="WP_011190591.1">
    <property type="nucleotide sequence ID" value="NC_006142.1"/>
</dbReference>
<dbReference type="SMR" id="Q68XN8"/>
<dbReference type="KEGG" id="rty:RT0118"/>
<dbReference type="eggNOG" id="COG0765">
    <property type="taxonomic scope" value="Bacteria"/>
</dbReference>
<dbReference type="HOGENOM" id="CLU_019602_1_1_5"/>
<dbReference type="OrthoDB" id="7190458at2"/>
<dbReference type="Proteomes" id="UP000000604">
    <property type="component" value="Chromosome"/>
</dbReference>
<dbReference type="GO" id="GO:0043190">
    <property type="term" value="C:ATP-binding cassette (ABC) transporter complex"/>
    <property type="evidence" value="ECO:0007669"/>
    <property type="project" value="InterPro"/>
</dbReference>
<dbReference type="GO" id="GO:0022857">
    <property type="term" value="F:transmembrane transporter activity"/>
    <property type="evidence" value="ECO:0007669"/>
    <property type="project" value="InterPro"/>
</dbReference>
<dbReference type="GO" id="GO:0006865">
    <property type="term" value="P:amino acid transport"/>
    <property type="evidence" value="ECO:0007669"/>
    <property type="project" value="UniProtKB-KW"/>
</dbReference>
<dbReference type="CDD" id="cd06261">
    <property type="entry name" value="TM_PBP2"/>
    <property type="match status" value="1"/>
</dbReference>
<dbReference type="Gene3D" id="1.10.3720.10">
    <property type="entry name" value="MetI-like"/>
    <property type="match status" value="1"/>
</dbReference>
<dbReference type="InterPro" id="IPR010065">
    <property type="entry name" value="AA_ABC_transptr_permease_3TM"/>
</dbReference>
<dbReference type="InterPro" id="IPR043429">
    <property type="entry name" value="ArtM/GltK/GlnP/TcyL/YhdX-like"/>
</dbReference>
<dbReference type="InterPro" id="IPR000515">
    <property type="entry name" value="MetI-like"/>
</dbReference>
<dbReference type="InterPro" id="IPR035906">
    <property type="entry name" value="MetI-like_sf"/>
</dbReference>
<dbReference type="NCBIfam" id="TIGR01726">
    <property type="entry name" value="HEQRo_perm_3TM"/>
    <property type="match status" value="1"/>
</dbReference>
<dbReference type="PANTHER" id="PTHR30614:SF20">
    <property type="entry name" value="GLUTAMINE TRANSPORT SYSTEM PERMEASE PROTEIN GLNP"/>
    <property type="match status" value="1"/>
</dbReference>
<dbReference type="PANTHER" id="PTHR30614">
    <property type="entry name" value="MEMBRANE COMPONENT OF AMINO ACID ABC TRANSPORTER"/>
    <property type="match status" value="1"/>
</dbReference>
<dbReference type="Pfam" id="PF00528">
    <property type="entry name" value="BPD_transp_1"/>
    <property type="match status" value="1"/>
</dbReference>
<dbReference type="SUPFAM" id="SSF161098">
    <property type="entry name" value="MetI-like"/>
    <property type="match status" value="1"/>
</dbReference>
<dbReference type="PROSITE" id="PS50928">
    <property type="entry name" value="ABC_TM1"/>
    <property type="match status" value="1"/>
</dbReference>
<proteinExistence type="inferred from homology"/>